<name>VMA21_VANPO</name>
<dbReference type="EMBL" id="DS480504">
    <property type="protein sequence ID" value="EDO14844.1"/>
    <property type="molecule type" value="Genomic_DNA"/>
</dbReference>
<dbReference type="RefSeq" id="XP_001642702.1">
    <property type="nucleotide sequence ID" value="XM_001642652.1"/>
</dbReference>
<dbReference type="SMR" id="A7TSA7"/>
<dbReference type="FunCoup" id="A7TSA7">
    <property type="interactions" value="70"/>
</dbReference>
<dbReference type="STRING" id="436907.A7TSA7"/>
<dbReference type="GeneID" id="5542874"/>
<dbReference type="KEGG" id="vpo:Kpol_359p4"/>
<dbReference type="eggNOG" id="ENOG502SBNA">
    <property type="taxonomic scope" value="Eukaryota"/>
</dbReference>
<dbReference type="HOGENOM" id="CLU_154717_1_0_1"/>
<dbReference type="InParanoid" id="A7TSA7"/>
<dbReference type="OMA" id="VMAFMED"/>
<dbReference type="OrthoDB" id="160405at2759"/>
<dbReference type="PhylomeDB" id="A7TSA7"/>
<dbReference type="Proteomes" id="UP000000267">
    <property type="component" value="Unassembled WGS sequence"/>
</dbReference>
<dbReference type="GO" id="GO:0005789">
    <property type="term" value="C:endoplasmic reticulum membrane"/>
    <property type="evidence" value="ECO:0007669"/>
    <property type="project" value="UniProtKB-SubCell"/>
</dbReference>
<dbReference type="GO" id="GO:0033116">
    <property type="term" value="C:endoplasmic reticulum-Golgi intermediate compartment membrane"/>
    <property type="evidence" value="ECO:0007669"/>
    <property type="project" value="UniProtKB-SubCell"/>
</dbReference>
<dbReference type="GO" id="GO:0012507">
    <property type="term" value="C:ER to Golgi transport vesicle membrane"/>
    <property type="evidence" value="ECO:0007669"/>
    <property type="project" value="UniProtKB-SubCell"/>
</dbReference>
<dbReference type="GO" id="GO:0070072">
    <property type="term" value="P:vacuolar proton-transporting V-type ATPase complex assembly"/>
    <property type="evidence" value="ECO:0007669"/>
    <property type="project" value="UniProtKB-UniRule"/>
</dbReference>
<dbReference type="HAMAP" id="MF_03058">
    <property type="entry name" value="VMA21"/>
    <property type="match status" value="1"/>
</dbReference>
<dbReference type="InterPro" id="IPR019013">
    <property type="entry name" value="Vma21"/>
</dbReference>
<dbReference type="Pfam" id="PF09446">
    <property type="entry name" value="VMA21"/>
    <property type="match status" value="1"/>
</dbReference>
<reference key="1">
    <citation type="journal article" date="2007" name="Proc. Natl. Acad. Sci. U.S.A.">
        <title>Independent sorting-out of thousands of duplicated gene pairs in two yeast species descended from a whole-genome duplication.</title>
        <authorList>
            <person name="Scannell D.R."/>
            <person name="Frank A.C."/>
            <person name="Conant G.C."/>
            <person name="Byrne K.P."/>
            <person name="Woolfit M."/>
            <person name="Wolfe K.H."/>
        </authorList>
    </citation>
    <scope>NUCLEOTIDE SEQUENCE [LARGE SCALE GENOMIC DNA]</scope>
    <source>
        <strain>ATCC 22028 / DSM 70294 / BCRC 21397 / CBS 2163 / NBRC 10782 / NRRL Y-8283 / UCD 57-17</strain>
    </source>
</reference>
<comment type="function">
    <text evidence="1">Required for the assembly of the V0 complex of the vacuolar ATPase (V-ATPase) in the endoplasmic reticulum.</text>
</comment>
<comment type="subcellular location">
    <subcellularLocation>
        <location evidence="1">Endoplasmic reticulum membrane</location>
        <topology evidence="1">Multi-pass membrane protein</topology>
    </subcellularLocation>
    <subcellularLocation>
        <location evidence="1">Endoplasmic reticulum-Golgi intermediate compartment membrane</location>
        <topology evidence="1">Multi-pass membrane protein</topology>
    </subcellularLocation>
    <subcellularLocation>
        <location evidence="1">Cytoplasmic vesicle</location>
        <location evidence="1">COPII-coated vesicle membrane</location>
        <topology evidence="1">Multi-pass membrane protein</topology>
    </subcellularLocation>
</comment>
<comment type="similarity">
    <text evidence="1">Belongs to the VMA21 family.</text>
</comment>
<sequence>MPVDVAPGVIKKLMFFTAAMVICPLLTFFSIKQFTTNTIVSGGLAALAANLVLIGYIVVAFMEDTTDVKAESKKD</sequence>
<proteinExistence type="inferred from homology"/>
<organism>
    <name type="scientific">Vanderwaltozyma polyspora (strain ATCC 22028 / DSM 70294 / BCRC 21397 / CBS 2163 / NBRC 10782 / NRRL Y-8283 / UCD 57-17)</name>
    <name type="common">Kluyveromyces polysporus</name>
    <dbReference type="NCBI Taxonomy" id="436907"/>
    <lineage>
        <taxon>Eukaryota</taxon>
        <taxon>Fungi</taxon>
        <taxon>Dikarya</taxon>
        <taxon>Ascomycota</taxon>
        <taxon>Saccharomycotina</taxon>
        <taxon>Saccharomycetes</taxon>
        <taxon>Saccharomycetales</taxon>
        <taxon>Saccharomycetaceae</taxon>
        <taxon>Vanderwaltozyma</taxon>
    </lineage>
</organism>
<keyword id="KW-0968">Cytoplasmic vesicle</keyword>
<keyword id="KW-0256">Endoplasmic reticulum</keyword>
<keyword id="KW-0472">Membrane</keyword>
<keyword id="KW-1185">Reference proteome</keyword>
<keyword id="KW-0812">Transmembrane</keyword>
<keyword id="KW-1133">Transmembrane helix</keyword>
<gene>
    <name evidence="1" type="primary">VMA21</name>
    <name type="ORF">Kpol_359p4</name>
</gene>
<protein>
    <recommendedName>
        <fullName evidence="1">Vacuolar ATPase assembly integral membrane protein VMA21</fullName>
    </recommendedName>
</protein>
<evidence type="ECO:0000255" key="1">
    <source>
        <dbReference type="HAMAP-Rule" id="MF_03058"/>
    </source>
</evidence>
<feature type="chain" id="PRO_0000377598" description="Vacuolar ATPase assembly integral membrane protein VMA21">
    <location>
        <begin position="1"/>
        <end position="75"/>
    </location>
</feature>
<feature type="topological domain" description="Cytoplasmic" evidence="1">
    <location>
        <begin position="1"/>
        <end position="8"/>
    </location>
</feature>
<feature type="transmembrane region" description="Helical" evidence="1">
    <location>
        <begin position="9"/>
        <end position="29"/>
    </location>
</feature>
<feature type="topological domain" description="Lumenal" evidence="1">
    <location>
        <begin position="30"/>
        <end position="41"/>
    </location>
</feature>
<feature type="transmembrane region" description="Helical" evidence="1">
    <location>
        <begin position="42"/>
        <end position="62"/>
    </location>
</feature>
<feature type="topological domain" description="Cytoplasmic" evidence="1">
    <location>
        <begin position="63"/>
        <end position="75"/>
    </location>
</feature>
<accession>A7TSA7</accession>